<sequence>MSEFEEKLNESSYGADSIKVLKGLEAVRKRPGMYIGDVGDGSGLHHMIYEVVDNAIDEALAGYCDLVRVVLNKNGSVTVSDNGRGIPVEIHEEEGISAAEVIMTQLHAGGKFDQNSYKVSGGLHGVGVSVVNALSDWLELRIWRNNTEHLIRFNNGITEAPLAVVKENVDKKGTEVTFFPSVETFTNIEFDFSIIEHRLRELAFLNSGVKILLTDNRFEEVKEVEFYYTGGIEAYVKYLDRAKHAVHSCIVVNADNTESGISLELAMHWNDSYHENILCFTNNIRQRDGGTHLSAFKSGLTRVITAYLENTGLNKKAKNAFSGEDTREGICCVLSVKVPDPKFSSQTKDKLVSSEVRPIVENAVYTKVLEWFEEHPADAKLIINKIMEAANAREAARKARELTRRKSVLEVSNLPGKLADCHAKDPAVSELFIVEGDSAGGTAKQGRDSKIQAILPLRGKILNVERARFDKMLGSDQIGTLITALGTGVDNREFSLEKLRYHKVIIMTDADVDGSHIRTLLLTFFYRHMPELINKGYLYIAQPPLYKVKKGASELYLKNEQALQDYLVKSAISDATLTLDNKEQLTNENLEELMSKVIKFNSLLDHASKKFNRSITEILAINDLLNNKIFDNESDSRLKKALNALNSLEQSPDKTDWEVLKHENKIEFFRFSRGLKERKILLREQLESFEFINISKLALTIFDVFNKQLKLVVKNQEFDILTPSILLNTIIECGKKGISVQRFKGLGEMNSDQLWDTTLDPKKRTLMQVRVAEVDEAEGIFSTLMGDVVEPRRQFIQSNALNVVNLDV</sequence>
<gene>
    <name evidence="1" type="primary">gyrB</name>
    <name type="ordered locus">RBE_0995</name>
</gene>
<proteinExistence type="inferred from homology"/>
<feature type="chain" id="PRO_0000273110" description="DNA gyrase subunit B">
    <location>
        <begin position="1"/>
        <end position="808"/>
    </location>
</feature>
<feature type="domain" description="Toprim" evidence="1">
    <location>
        <begin position="429"/>
        <end position="544"/>
    </location>
</feature>
<feature type="binding site" evidence="1">
    <location>
        <position position="435"/>
    </location>
    <ligand>
        <name>Mg(2+)</name>
        <dbReference type="ChEBI" id="CHEBI:18420"/>
        <label>1</label>
        <note>catalytic</note>
    </ligand>
</feature>
<feature type="binding site" evidence="1">
    <location>
        <position position="509"/>
    </location>
    <ligand>
        <name>Mg(2+)</name>
        <dbReference type="ChEBI" id="CHEBI:18420"/>
        <label>1</label>
        <note>catalytic</note>
    </ligand>
</feature>
<feature type="binding site" evidence="1">
    <location>
        <position position="509"/>
    </location>
    <ligand>
        <name>Mg(2+)</name>
        <dbReference type="ChEBI" id="CHEBI:18420"/>
        <label>2</label>
    </ligand>
</feature>
<feature type="binding site" evidence="1">
    <location>
        <position position="511"/>
    </location>
    <ligand>
        <name>Mg(2+)</name>
        <dbReference type="ChEBI" id="CHEBI:18420"/>
        <label>2</label>
    </ligand>
</feature>
<feature type="site" description="Interaction with DNA" evidence="1">
    <location>
        <position position="460"/>
    </location>
</feature>
<feature type="site" description="Interaction with DNA" evidence="1">
    <location>
        <position position="463"/>
    </location>
</feature>
<protein>
    <recommendedName>
        <fullName evidence="1">DNA gyrase subunit B</fullName>
        <ecNumber evidence="1">5.6.2.2</ecNumber>
    </recommendedName>
</protein>
<reference key="1">
    <citation type="journal article" date="2006" name="PLoS Genet.">
        <title>Genome sequence of Rickettsia bellii illuminates the role of amoebae in gene exchanges between intracellular pathogens.</title>
        <authorList>
            <person name="Ogata H."/>
            <person name="La Scola B."/>
            <person name="Audic S."/>
            <person name="Renesto P."/>
            <person name="Blanc G."/>
            <person name="Robert C."/>
            <person name="Fournier P.-E."/>
            <person name="Claverie J.-M."/>
            <person name="Raoult D."/>
        </authorList>
    </citation>
    <scope>NUCLEOTIDE SEQUENCE [LARGE SCALE GENOMIC DNA]</scope>
    <source>
        <strain>RML369-C</strain>
    </source>
</reference>
<evidence type="ECO:0000255" key="1">
    <source>
        <dbReference type="HAMAP-Rule" id="MF_01898"/>
    </source>
</evidence>
<dbReference type="EC" id="5.6.2.2" evidence="1"/>
<dbReference type="EMBL" id="CP000087">
    <property type="protein sequence ID" value="ABE05076.1"/>
    <property type="molecule type" value="Genomic_DNA"/>
</dbReference>
<dbReference type="RefSeq" id="WP_011477656.1">
    <property type="nucleotide sequence ID" value="NC_007940.1"/>
</dbReference>
<dbReference type="SMR" id="Q1RHT8"/>
<dbReference type="KEGG" id="rbe:RBE_0995"/>
<dbReference type="eggNOG" id="COG0187">
    <property type="taxonomic scope" value="Bacteria"/>
</dbReference>
<dbReference type="HOGENOM" id="CLU_006146_4_1_5"/>
<dbReference type="OrthoDB" id="9802808at2"/>
<dbReference type="Proteomes" id="UP000001951">
    <property type="component" value="Chromosome"/>
</dbReference>
<dbReference type="GO" id="GO:0005694">
    <property type="term" value="C:chromosome"/>
    <property type="evidence" value="ECO:0007669"/>
    <property type="project" value="InterPro"/>
</dbReference>
<dbReference type="GO" id="GO:0005737">
    <property type="term" value="C:cytoplasm"/>
    <property type="evidence" value="ECO:0007669"/>
    <property type="project" value="UniProtKB-SubCell"/>
</dbReference>
<dbReference type="GO" id="GO:0005524">
    <property type="term" value="F:ATP binding"/>
    <property type="evidence" value="ECO:0007669"/>
    <property type="project" value="UniProtKB-UniRule"/>
</dbReference>
<dbReference type="GO" id="GO:0003677">
    <property type="term" value="F:DNA binding"/>
    <property type="evidence" value="ECO:0007669"/>
    <property type="project" value="UniProtKB-KW"/>
</dbReference>
<dbReference type="GO" id="GO:0003918">
    <property type="term" value="F:DNA topoisomerase type II (double strand cut, ATP-hydrolyzing) activity"/>
    <property type="evidence" value="ECO:0007669"/>
    <property type="project" value="UniProtKB-UniRule"/>
</dbReference>
<dbReference type="GO" id="GO:0046872">
    <property type="term" value="F:metal ion binding"/>
    <property type="evidence" value="ECO:0007669"/>
    <property type="project" value="UniProtKB-KW"/>
</dbReference>
<dbReference type="GO" id="GO:0006265">
    <property type="term" value="P:DNA topological change"/>
    <property type="evidence" value="ECO:0007669"/>
    <property type="project" value="UniProtKB-UniRule"/>
</dbReference>
<dbReference type="GO" id="GO:0006261">
    <property type="term" value="P:DNA-templated DNA replication"/>
    <property type="evidence" value="ECO:0007669"/>
    <property type="project" value="UniProtKB-UniRule"/>
</dbReference>
<dbReference type="CDD" id="cd16928">
    <property type="entry name" value="HATPase_GyrB-like"/>
    <property type="match status" value="1"/>
</dbReference>
<dbReference type="CDD" id="cd00822">
    <property type="entry name" value="TopoII_Trans_DNA_gyrase"/>
    <property type="match status" value="1"/>
</dbReference>
<dbReference type="CDD" id="cd03366">
    <property type="entry name" value="TOPRIM_TopoIIA_GyrB"/>
    <property type="match status" value="1"/>
</dbReference>
<dbReference type="FunFam" id="3.30.230.10:FF:000005">
    <property type="entry name" value="DNA gyrase subunit B"/>
    <property type="match status" value="1"/>
</dbReference>
<dbReference type="FunFam" id="3.30.565.10:FF:000002">
    <property type="entry name" value="DNA gyrase subunit B"/>
    <property type="match status" value="1"/>
</dbReference>
<dbReference type="FunFam" id="3.40.50.670:FF:000001">
    <property type="entry name" value="DNA topoisomerase 2"/>
    <property type="match status" value="1"/>
</dbReference>
<dbReference type="Gene3D" id="3.30.230.10">
    <property type="match status" value="1"/>
</dbReference>
<dbReference type="Gene3D" id="3.40.50.670">
    <property type="match status" value="2"/>
</dbReference>
<dbReference type="Gene3D" id="3.30.565.10">
    <property type="entry name" value="Histidine kinase-like ATPase, C-terminal domain"/>
    <property type="match status" value="1"/>
</dbReference>
<dbReference type="HAMAP" id="MF_01898">
    <property type="entry name" value="GyrB"/>
    <property type="match status" value="1"/>
</dbReference>
<dbReference type="InterPro" id="IPR002288">
    <property type="entry name" value="DNA_gyrase_B_C"/>
</dbReference>
<dbReference type="InterPro" id="IPR011557">
    <property type="entry name" value="GyrB"/>
</dbReference>
<dbReference type="InterPro" id="IPR049353">
    <property type="entry name" value="GyrB_hook"/>
</dbReference>
<dbReference type="InterPro" id="IPR036890">
    <property type="entry name" value="HATPase_C_sf"/>
</dbReference>
<dbReference type="InterPro" id="IPR020568">
    <property type="entry name" value="Ribosomal_Su5_D2-typ_SF"/>
</dbReference>
<dbReference type="InterPro" id="IPR014721">
    <property type="entry name" value="Ribsml_uS5_D2-typ_fold_subgr"/>
</dbReference>
<dbReference type="InterPro" id="IPR001241">
    <property type="entry name" value="Topo_IIA"/>
</dbReference>
<dbReference type="InterPro" id="IPR013760">
    <property type="entry name" value="Topo_IIA-like_dom_sf"/>
</dbReference>
<dbReference type="InterPro" id="IPR000565">
    <property type="entry name" value="Topo_IIA_B"/>
</dbReference>
<dbReference type="InterPro" id="IPR013759">
    <property type="entry name" value="Topo_IIA_B_C"/>
</dbReference>
<dbReference type="InterPro" id="IPR013506">
    <property type="entry name" value="Topo_IIA_bsu_dom2"/>
</dbReference>
<dbReference type="InterPro" id="IPR018522">
    <property type="entry name" value="TopoIIA_CS"/>
</dbReference>
<dbReference type="InterPro" id="IPR006171">
    <property type="entry name" value="TOPRIM_dom"/>
</dbReference>
<dbReference type="InterPro" id="IPR034160">
    <property type="entry name" value="TOPRIM_GyrB"/>
</dbReference>
<dbReference type="NCBIfam" id="TIGR01059">
    <property type="entry name" value="gyrB"/>
    <property type="match status" value="1"/>
</dbReference>
<dbReference type="NCBIfam" id="NF004189">
    <property type="entry name" value="PRK05644.1"/>
    <property type="match status" value="1"/>
</dbReference>
<dbReference type="NCBIfam" id="NF011501">
    <property type="entry name" value="PRK14939.1"/>
    <property type="match status" value="1"/>
</dbReference>
<dbReference type="PANTHER" id="PTHR45866:SF1">
    <property type="entry name" value="DNA GYRASE SUBUNIT B, MITOCHONDRIAL"/>
    <property type="match status" value="1"/>
</dbReference>
<dbReference type="PANTHER" id="PTHR45866">
    <property type="entry name" value="DNA GYRASE/TOPOISOMERASE SUBUNIT B"/>
    <property type="match status" value="1"/>
</dbReference>
<dbReference type="Pfam" id="PF00204">
    <property type="entry name" value="DNA_gyraseB"/>
    <property type="match status" value="1"/>
</dbReference>
<dbReference type="Pfam" id="PF00986">
    <property type="entry name" value="DNA_gyraseB_C"/>
    <property type="match status" value="1"/>
</dbReference>
<dbReference type="Pfam" id="PF21249">
    <property type="entry name" value="GyrB_hook"/>
    <property type="match status" value="1"/>
</dbReference>
<dbReference type="Pfam" id="PF02518">
    <property type="entry name" value="HATPase_c"/>
    <property type="match status" value="1"/>
</dbReference>
<dbReference type="Pfam" id="PF01751">
    <property type="entry name" value="Toprim"/>
    <property type="match status" value="1"/>
</dbReference>
<dbReference type="PRINTS" id="PR01159">
    <property type="entry name" value="DNAGYRASEB"/>
</dbReference>
<dbReference type="PRINTS" id="PR00418">
    <property type="entry name" value="TPI2FAMILY"/>
</dbReference>
<dbReference type="SMART" id="SM00387">
    <property type="entry name" value="HATPase_c"/>
    <property type="match status" value="1"/>
</dbReference>
<dbReference type="SMART" id="SM00433">
    <property type="entry name" value="TOP2c"/>
    <property type="match status" value="1"/>
</dbReference>
<dbReference type="SUPFAM" id="SSF55874">
    <property type="entry name" value="ATPase domain of HSP90 chaperone/DNA topoisomerase II/histidine kinase"/>
    <property type="match status" value="1"/>
</dbReference>
<dbReference type="SUPFAM" id="SSF54211">
    <property type="entry name" value="Ribosomal protein S5 domain 2-like"/>
    <property type="match status" value="1"/>
</dbReference>
<dbReference type="SUPFAM" id="SSF56719">
    <property type="entry name" value="Type II DNA topoisomerase"/>
    <property type="match status" value="1"/>
</dbReference>
<dbReference type="PROSITE" id="PS00177">
    <property type="entry name" value="TOPOISOMERASE_II"/>
    <property type="match status" value="1"/>
</dbReference>
<dbReference type="PROSITE" id="PS50880">
    <property type="entry name" value="TOPRIM"/>
    <property type="match status" value="1"/>
</dbReference>
<accession>Q1RHT8</accession>
<organism>
    <name type="scientific">Rickettsia bellii (strain RML369-C)</name>
    <dbReference type="NCBI Taxonomy" id="336407"/>
    <lineage>
        <taxon>Bacteria</taxon>
        <taxon>Pseudomonadati</taxon>
        <taxon>Pseudomonadota</taxon>
        <taxon>Alphaproteobacteria</taxon>
        <taxon>Rickettsiales</taxon>
        <taxon>Rickettsiaceae</taxon>
        <taxon>Rickettsieae</taxon>
        <taxon>Rickettsia</taxon>
        <taxon>belli group</taxon>
    </lineage>
</organism>
<keyword id="KW-0067">ATP-binding</keyword>
<keyword id="KW-0963">Cytoplasm</keyword>
<keyword id="KW-0238">DNA-binding</keyword>
<keyword id="KW-0413">Isomerase</keyword>
<keyword id="KW-0460">Magnesium</keyword>
<keyword id="KW-0479">Metal-binding</keyword>
<keyword id="KW-0547">Nucleotide-binding</keyword>
<keyword id="KW-0799">Topoisomerase</keyword>
<comment type="function">
    <text evidence="1">A type II topoisomerase that negatively supercoils closed circular double-stranded (ds) DNA in an ATP-dependent manner to modulate DNA topology and maintain chromosomes in an underwound state. Negative supercoiling favors strand separation, and DNA replication, transcription, recombination and repair, all of which involve strand separation. Also able to catalyze the interconversion of other topological isomers of dsDNA rings, including catenanes and knotted rings. Type II topoisomerases break and join 2 DNA strands simultaneously in an ATP-dependent manner.</text>
</comment>
<comment type="catalytic activity">
    <reaction evidence="1">
        <text>ATP-dependent breakage, passage and rejoining of double-stranded DNA.</text>
        <dbReference type="EC" id="5.6.2.2"/>
    </reaction>
</comment>
<comment type="cofactor">
    <cofactor evidence="1">
        <name>Mg(2+)</name>
        <dbReference type="ChEBI" id="CHEBI:18420"/>
    </cofactor>
    <cofactor evidence="1">
        <name>Mn(2+)</name>
        <dbReference type="ChEBI" id="CHEBI:29035"/>
    </cofactor>
    <cofactor evidence="1">
        <name>Ca(2+)</name>
        <dbReference type="ChEBI" id="CHEBI:29108"/>
    </cofactor>
    <text evidence="1">Binds two Mg(2+) per subunit. The magnesium ions form salt bridges with both the protein and the DNA. Can also accept other divalent metal cations, such as Mn(2+) or Ca(2+).</text>
</comment>
<comment type="subunit">
    <text evidence="1">Heterotetramer, composed of two GyrA and two GyrB chains. In the heterotetramer, GyrA contains the active site tyrosine that forms a transient covalent intermediate with DNA, while GyrB binds cofactors and catalyzes ATP hydrolysis.</text>
</comment>
<comment type="subcellular location">
    <subcellularLocation>
        <location evidence="1">Cytoplasm</location>
    </subcellularLocation>
</comment>
<comment type="miscellaneous">
    <text evidence="1">Few gyrases are as efficient as E.coli at forming negative supercoils. Not all organisms have 2 type II topoisomerases; in organisms with a single type II topoisomerase this enzyme also has to decatenate newly replicated chromosomes.</text>
</comment>
<comment type="similarity">
    <text evidence="1">Belongs to the type II topoisomerase GyrB family.</text>
</comment>
<name>GYRB_RICBR</name>